<reference key="1">
    <citation type="journal article" date="2011" name="J. Bacteriol.">
        <title>Complete genome sequence and updated annotation of Desulfovibrio alaskensis G20.</title>
        <authorList>
            <person name="Hauser L.J."/>
            <person name="Land M.L."/>
            <person name="Brown S.D."/>
            <person name="Larimer F."/>
            <person name="Keller K.L."/>
            <person name="Rapp-Giles B.J."/>
            <person name="Price M.N."/>
            <person name="Lin M."/>
            <person name="Bruce D.C."/>
            <person name="Detter J.C."/>
            <person name="Tapia R."/>
            <person name="Han C.S."/>
            <person name="Goodwin L.A."/>
            <person name="Cheng J.F."/>
            <person name="Pitluck S."/>
            <person name="Copeland A."/>
            <person name="Lucas S."/>
            <person name="Nolan M."/>
            <person name="Lapidus A.L."/>
            <person name="Palumbo A.V."/>
            <person name="Wall J.D."/>
        </authorList>
    </citation>
    <scope>NUCLEOTIDE SEQUENCE [LARGE SCALE GENOMIC DNA]</scope>
    <source>
        <strain>ATCC BAA-1058 / DSM 17464 / G20</strain>
    </source>
</reference>
<sequence length="750" mass="81752">MENLFGAKRLTATVGGKEIIMETGRLANQADGAVWIQCGGTVVLCTVCTQPLEREISFFPLVVDYTEKMYAAGRIPGSFFRREIGRPSERETLVSRLIDRPLRPLFPKGFTNEVQILANVISADQENDSDVLALCGSSAAVMLSSVPFEAPVAGARVCRIDGEFVLNPTITEAAKADLNLVVAANRDALVMVEGEADFVPEEVIAQALEWAHREVQPIIDMQEKLRELAGKAKIEFVAPEEDTELKEKAEALATADLAAALQVREKMARKEAKKAVKEKVKAALLQDPAFAETPERLAALGDILSSLEKRIVRQRILKEGLRIDGRDTKTVRPIIIEAGALPRAHGSAIFSRGETKSLVVTTLGSTTDEQRMDSLTGDVTKRFMLHYNFPPYSVGEVKPVRVSRREIGHGALAERALRPVLPSPDSFPFTLRVVSETMESNGSSSMAAVCGGSLSLMDAGVPVKAPVAGIAMGLIKEDDQFIVLTDILGDEDALGDMDFKIAGTAEGVTAVQMDIKIDGLPAEVMGRALAQAREARLHILNEMAKVLPEPRQALSKYAPQLSVVEVNPEIIRVIIGPGGKNIKAITSATGASIDIEDSGRISIFAPTKESMDMAREMVMYYDQRPELGKNYTAKVRKIMEIGAIVEILPNCEALIHISQLDTSRVEKTEDVVQLGQDVEVKVIEINDGRVRASRKAVMLEAQGVEWDPADTARPPRKPRDRDDRGDRGGRGDRGDRGGRNGRGGDRRDRR</sequence>
<name>PNP_OLEA2</name>
<comment type="function">
    <text evidence="1">Involved in mRNA degradation. Catalyzes the phosphorolysis of single-stranded polyribonucleotides processively in the 3'- to 5'-direction.</text>
</comment>
<comment type="catalytic activity">
    <reaction evidence="1">
        <text>RNA(n+1) + phosphate = RNA(n) + a ribonucleoside 5'-diphosphate</text>
        <dbReference type="Rhea" id="RHEA:22096"/>
        <dbReference type="Rhea" id="RHEA-COMP:14527"/>
        <dbReference type="Rhea" id="RHEA-COMP:17342"/>
        <dbReference type="ChEBI" id="CHEBI:43474"/>
        <dbReference type="ChEBI" id="CHEBI:57930"/>
        <dbReference type="ChEBI" id="CHEBI:140395"/>
        <dbReference type="EC" id="2.7.7.8"/>
    </reaction>
</comment>
<comment type="cofactor">
    <cofactor evidence="1">
        <name>Mg(2+)</name>
        <dbReference type="ChEBI" id="CHEBI:18420"/>
    </cofactor>
</comment>
<comment type="subcellular location">
    <subcellularLocation>
        <location evidence="1">Cytoplasm</location>
    </subcellularLocation>
</comment>
<comment type="similarity">
    <text evidence="1">Belongs to the polyribonucleotide nucleotidyltransferase family.</text>
</comment>
<protein>
    <recommendedName>
        <fullName evidence="1">Polyribonucleotide nucleotidyltransferase</fullName>
        <ecNumber evidence="1">2.7.7.8</ecNumber>
    </recommendedName>
    <alternativeName>
        <fullName evidence="1">Polynucleotide phosphorylase</fullName>
        <shortName evidence="1">PNPase</shortName>
    </alternativeName>
</protein>
<accession>Q30WI5</accession>
<gene>
    <name evidence="1" type="primary">pnp</name>
    <name type="ordered locus">Dde_3167</name>
</gene>
<organism>
    <name type="scientific">Oleidesulfovibrio alaskensis (strain ATCC BAA-1058 / DSM 17464 / G20)</name>
    <name type="common">Desulfovibrio alaskensis</name>
    <dbReference type="NCBI Taxonomy" id="207559"/>
    <lineage>
        <taxon>Bacteria</taxon>
        <taxon>Pseudomonadati</taxon>
        <taxon>Thermodesulfobacteriota</taxon>
        <taxon>Desulfovibrionia</taxon>
        <taxon>Desulfovibrionales</taxon>
        <taxon>Desulfovibrionaceae</taxon>
        <taxon>Oleidesulfovibrio</taxon>
    </lineage>
</organism>
<dbReference type="EC" id="2.7.7.8" evidence="1"/>
<dbReference type="EMBL" id="CP000112">
    <property type="protein sequence ID" value="ABB39961.1"/>
    <property type="molecule type" value="Genomic_DNA"/>
</dbReference>
<dbReference type="RefSeq" id="WP_011368916.1">
    <property type="nucleotide sequence ID" value="NC_007519.1"/>
</dbReference>
<dbReference type="SMR" id="Q30WI5"/>
<dbReference type="STRING" id="207559.Dde_3167"/>
<dbReference type="KEGG" id="dde:Dde_3167"/>
<dbReference type="eggNOG" id="COG1185">
    <property type="taxonomic scope" value="Bacteria"/>
</dbReference>
<dbReference type="HOGENOM" id="CLU_004217_2_2_7"/>
<dbReference type="Proteomes" id="UP000002710">
    <property type="component" value="Chromosome"/>
</dbReference>
<dbReference type="GO" id="GO:0005829">
    <property type="term" value="C:cytosol"/>
    <property type="evidence" value="ECO:0007669"/>
    <property type="project" value="TreeGrafter"/>
</dbReference>
<dbReference type="GO" id="GO:0000175">
    <property type="term" value="F:3'-5'-RNA exonuclease activity"/>
    <property type="evidence" value="ECO:0007669"/>
    <property type="project" value="TreeGrafter"/>
</dbReference>
<dbReference type="GO" id="GO:0000287">
    <property type="term" value="F:magnesium ion binding"/>
    <property type="evidence" value="ECO:0007669"/>
    <property type="project" value="UniProtKB-UniRule"/>
</dbReference>
<dbReference type="GO" id="GO:0004654">
    <property type="term" value="F:polyribonucleotide nucleotidyltransferase activity"/>
    <property type="evidence" value="ECO:0007669"/>
    <property type="project" value="UniProtKB-UniRule"/>
</dbReference>
<dbReference type="GO" id="GO:0003723">
    <property type="term" value="F:RNA binding"/>
    <property type="evidence" value="ECO:0007669"/>
    <property type="project" value="UniProtKB-UniRule"/>
</dbReference>
<dbReference type="GO" id="GO:0006402">
    <property type="term" value="P:mRNA catabolic process"/>
    <property type="evidence" value="ECO:0007669"/>
    <property type="project" value="UniProtKB-UniRule"/>
</dbReference>
<dbReference type="GO" id="GO:0006396">
    <property type="term" value="P:RNA processing"/>
    <property type="evidence" value="ECO:0007669"/>
    <property type="project" value="InterPro"/>
</dbReference>
<dbReference type="CDD" id="cd02393">
    <property type="entry name" value="KH-I_PNPase"/>
    <property type="match status" value="1"/>
</dbReference>
<dbReference type="CDD" id="cd11363">
    <property type="entry name" value="RNase_PH_PNPase_1"/>
    <property type="match status" value="1"/>
</dbReference>
<dbReference type="CDD" id="cd11364">
    <property type="entry name" value="RNase_PH_PNPase_2"/>
    <property type="match status" value="1"/>
</dbReference>
<dbReference type="FunFam" id="3.30.1370.10:FF:000001">
    <property type="entry name" value="Polyribonucleotide nucleotidyltransferase"/>
    <property type="match status" value="1"/>
</dbReference>
<dbReference type="FunFam" id="3.30.230.70:FF:000001">
    <property type="entry name" value="Polyribonucleotide nucleotidyltransferase"/>
    <property type="match status" value="1"/>
</dbReference>
<dbReference type="FunFam" id="3.30.230.70:FF:000002">
    <property type="entry name" value="Polyribonucleotide nucleotidyltransferase"/>
    <property type="match status" value="1"/>
</dbReference>
<dbReference type="Gene3D" id="3.30.230.70">
    <property type="entry name" value="GHMP Kinase, N-terminal domain"/>
    <property type="match status" value="2"/>
</dbReference>
<dbReference type="Gene3D" id="3.30.1370.10">
    <property type="entry name" value="K Homology domain, type 1"/>
    <property type="match status" value="1"/>
</dbReference>
<dbReference type="Gene3D" id="2.40.50.140">
    <property type="entry name" value="Nucleic acid-binding proteins"/>
    <property type="match status" value="1"/>
</dbReference>
<dbReference type="HAMAP" id="MF_01595">
    <property type="entry name" value="PNPase"/>
    <property type="match status" value="1"/>
</dbReference>
<dbReference type="InterPro" id="IPR001247">
    <property type="entry name" value="ExoRNase_PH_dom1"/>
</dbReference>
<dbReference type="InterPro" id="IPR015847">
    <property type="entry name" value="ExoRNase_PH_dom2"/>
</dbReference>
<dbReference type="InterPro" id="IPR036345">
    <property type="entry name" value="ExoRNase_PH_dom2_sf"/>
</dbReference>
<dbReference type="InterPro" id="IPR004087">
    <property type="entry name" value="KH_dom"/>
</dbReference>
<dbReference type="InterPro" id="IPR004088">
    <property type="entry name" value="KH_dom_type_1"/>
</dbReference>
<dbReference type="InterPro" id="IPR036612">
    <property type="entry name" value="KH_dom_type_1_sf"/>
</dbReference>
<dbReference type="InterPro" id="IPR012340">
    <property type="entry name" value="NA-bd_OB-fold"/>
</dbReference>
<dbReference type="InterPro" id="IPR012162">
    <property type="entry name" value="PNPase"/>
</dbReference>
<dbReference type="InterPro" id="IPR027408">
    <property type="entry name" value="PNPase/RNase_PH_dom_sf"/>
</dbReference>
<dbReference type="InterPro" id="IPR015848">
    <property type="entry name" value="PNPase_PH_RNA-bd_bac/org-type"/>
</dbReference>
<dbReference type="InterPro" id="IPR036456">
    <property type="entry name" value="PNPase_PH_RNA-bd_sf"/>
</dbReference>
<dbReference type="InterPro" id="IPR020568">
    <property type="entry name" value="Ribosomal_Su5_D2-typ_SF"/>
</dbReference>
<dbReference type="InterPro" id="IPR003029">
    <property type="entry name" value="S1_domain"/>
</dbReference>
<dbReference type="NCBIfam" id="TIGR03591">
    <property type="entry name" value="polynuc_phos"/>
    <property type="match status" value="1"/>
</dbReference>
<dbReference type="NCBIfam" id="NF008805">
    <property type="entry name" value="PRK11824.1"/>
    <property type="match status" value="1"/>
</dbReference>
<dbReference type="PANTHER" id="PTHR11252">
    <property type="entry name" value="POLYRIBONUCLEOTIDE NUCLEOTIDYLTRANSFERASE"/>
    <property type="match status" value="1"/>
</dbReference>
<dbReference type="PANTHER" id="PTHR11252:SF0">
    <property type="entry name" value="POLYRIBONUCLEOTIDE NUCLEOTIDYLTRANSFERASE 1, MITOCHONDRIAL"/>
    <property type="match status" value="1"/>
</dbReference>
<dbReference type="Pfam" id="PF00013">
    <property type="entry name" value="KH_1"/>
    <property type="match status" value="1"/>
</dbReference>
<dbReference type="Pfam" id="PF03726">
    <property type="entry name" value="PNPase"/>
    <property type="match status" value="1"/>
</dbReference>
<dbReference type="Pfam" id="PF01138">
    <property type="entry name" value="RNase_PH"/>
    <property type="match status" value="2"/>
</dbReference>
<dbReference type="Pfam" id="PF03725">
    <property type="entry name" value="RNase_PH_C"/>
    <property type="match status" value="2"/>
</dbReference>
<dbReference type="Pfam" id="PF00575">
    <property type="entry name" value="S1"/>
    <property type="match status" value="1"/>
</dbReference>
<dbReference type="PIRSF" id="PIRSF005499">
    <property type="entry name" value="PNPase"/>
    <property type="match status" value="1"/>
</dbReference>
<dbReference type="SMART" id="SM00322">
    <property type="entry name" value="KH"/>
    <property type="match status" value="1"/>
</dbReference>
<dbReference type="SMART" id="SM00316">
    <property type="entry name" value="S1"/>
    <property type="match status" value="1"/>
</dbReference>
<dbReference type="SUPFAM" id="SSF54791">
    <property type="entry name" value="Eukaryotic type KH-domain (KH-domain type I)"/>
    <property type="match status" value="1"/>
</dbReference>
<dbReference type="SUPFAM" id="SSF50249">
    <property type="entry name" value="Nucleic acid-binding proteins"/>
    <property type="match status" value="1"/>
</dbReference>
<dbReference type="SUPFAM" id="SSF46915">
    <property type="entry name" value="Polynucleotide phosphorylase/guanosine pentaphosphate synthase (PNPase/GPSI), domain 3"/>
    <property type="match status" value="1"/>
</dbReference>
<dbReference type="SUPFAM" id="SSF55666">
    <property type="entry name" value="Ribonuclease PH domain 2-like"/>
    <property type="match status" value="2"/>
</dbReference>
<dbReference type="SUPFAM" id="SSF54211">
    <property type="entry name" value="Ribosomal protein S5 domain 2-like"/>
    <property type="match status" value="2"/>
</dbReference>
<dbReference type="PROSITE" id="PS50084">
    <property type="entry name" value="KH_TYPE_1"/>
    <property type="match status" value="1"/>
</dbReference>
<dbReference type="PROSITE" id="PS50126">
    <property type="entry name" value="S1"/>
    <property type="match status" value="1"/>
</dbReference>
<keyword id="KW-0963">Cytoplasm</keyword>
<keyword id="KW-0460">Magnesium</keyword>
<keyword id="KW-0479">Metal-binding</keyword>
<keyword id="KW-0548">Nucleotidyltransferase</keyword>
<keyword id="KW-1185">Reference proteome</keyword>
<keyword id="KW-0694">RNA-binding</keyword>
<keyword id="KW-0808">Transferase</keyword>
<proteinExistence type="inferred from homology"/>
<evidence type="ECO:0000255" key="1">
    <source>
        <dbReference type="HAMAP-Rule" id="MF_01595"/>
    </source>
</evidence>
<evidence type="ECO:0000256" key="2">
    <source>
        <dbReference type="SAM" id="MobiDB-lite"/>
    </source>
</evidence>
<feature type="chain" id="PRO_0000329625" description="Polyribonucleotide nucleotidyltransferase">
    <location>
        <begin position="1"/>
        <end position="750"/>
    </location>
</feature>
<feature type="domain" description="KH" evidence="1">
    <location>
        <begin position="559"/>
        <end position="618"/>
    </location>
</feature>
<feature type="domain" description="S1 motif" evidence="1">
    <location>
        <begin position="628"/>
        <end position="695"/>
    </location>
</feature>
<feature type="region of interest" description="Disordered" evidence="2">
    <location>
        <begin position="705"/>
        <end position="750"/>
    </location>
</feature>
<feature type="compositionally biased region" description="Basic and acidic residues" evidence="2">
    <location>
        <begin position="717"/>
        <end position="750"/>
    </location>
</feature>
<feature type="binding site" evidence="1">
    <location>
        <position position="492"/>
    </location>
    <ligand>
        <name>Mg(2+)</name>
        <dbReference type="ChEBI" id="CHEBI:18420"/>
    </ligand>
</feature>
<feature type="binding site" evidence="1">
    <location>
        <position position="498"/>
    </location>
    <ligand>
        <name>Mg(2+)</name>
        <dbReference type="ChEBI" id="CHEBI:18420"/>
    </ligand>
</feature>